<name>CCMA_BRUA2</name>
<protein>
    <recommendedName>
        <fullName evidence="1">Cytochrome c biogenesis ATP-binding export protein CcmA</fullName>
        <ecNumber evidence="1">7.6.2.5</ecNumber>
    </recommendedName>
    <alternativeName>
        <fullName evidence="1">Heme exporter protein A</fullName>
    </alternativeName>
</protein>
<accession>Q2YNU0</accession>
<sequence>MRLEAENLAGERGGETIFSHLSFTIGTGQALVVTGPNGSGKSTLLRIICGLLAPEAGEVKLTEGTQIVPVRAACHYLGHQNAMKPALSVRENLLFWQKFNGGEALDIGAALEAVDLAGVEHLPFGYLSTGQKRRVSIAKLLVSHRPLWIVDEPTAGLDKASEARFAELMREHMRQDGMIIAATHIPLGLDGAISTTGNALVRSLDMAAFSVEDIA</sequence>
<keyword id="KW-0067">ATP-binding</keyword>
<keyword id="KW-0997">Cell inner membrane</keyword>
<keyword id="KW-1003">Cell membrane</keyword>
<keyword id="KW-0201">Cytochrome c-type biogenesis</keyword>
<keyword id="KW-0472">Membrane</keyword>
<keyword id="KW-0547">Nucleotide-binding</keyword>
<keyword id="KW-1185">Reference proteome</keyword>
<keyword id="KW-1278">Translocase</keyword>
<keyword id="KW-0813">Transport</keyword>
<dbReference type="EC" id="7.6.2.5" evidence="1"/>
<dbReference type="EMBL" id="AM040264">
    <property type="protein sequence ID" value="CAJ10047.1"/>
    <property type="molecule type" value="Genomic_DNA"/>
</dbReference>
<dbReference type="RefSeq" id="WP_002965342.1">
    <property type="nucleotide sequence ID" value="NZ_KN046823.1"/>
</dbReference>
<dbReference type="SMR" id="Q2YNU0"/>
<dbReference type="STRING" id="359391.BAB1_0091"/>
<dbReference type="GeneID" id="97534484"/>
<dbReference type="KEGG" id="bmf:BAB1_0091"/>
<dbReference type="PATRIC" id="fig|359391.11.peg.1516"/>
<dbReference type="HOGENOM" id="CLU_000604_1_2_5"/>
<dbReference type="PhylomeDB" id="Q2YNU0"/>
<dbReference type="Proteomes" id="UP000002719">
    <property type="component" value="Chromosome I"/>
</dbReference>
<dbReference type="GO" id="GO:0005886">
    <property type="term" value="C:plasma membrane"/>
    <property type="evidence" value="ECO:0007669"/>
    <property type="project" value="UniProtKB-SubCell"/>
</dbReference>
<dbReference type="GO" id="GO:0015439">
    <property type="term" value="F:ABC-type heme transporter activity"/>
    <property type="evidence" value="ECO:0007669"/>
    <property type="project" value="UniProtKB-EC"/>
</dbReference>
<dbReference type="GO" id="GO:0005524">
    <property type="term" value="F:ATP binding"/>
    <property type="evidence" value="ECO:0007669"/>
    <property type="project" value="UniProtKB-KW"/>
</dbReference>
<dbReference type="GO" id="GO:0016887">
    <property type="term" value="F:ATP hydrolysis activity"/>
    <property type="evidence" value="ECO:0007669"/>
    <property type="project" value="InterPro"/>
</dbReference>
<dbReference type="GO" id="GO:0017004">
    <property type="term" value="P:cytochrome complex assembly"/>
    <property type="evidence" value="ECO:0007669"/>
    <property type="project" value="UniProtKB-KW"/>
</dbReference>
<dbReference type="CDD" id="cd03231">
    <property type="entry name" value="ABC_CcmA_heme_exporter"/>
    <property type="match status" value="1"/>
</dbReference>
<dbReference type="Gene3D" id="3.40.50.300">
    <property type="entry name" value="P-loop containing nucleotide triphosphate hydrolases"/>
    <property type="match status" value="1"/>
</dbReference>
<dbReference type="InterPro" id="IPR003593">
    <property type="entry name" value="AAA+_ATPase"/>
</dbReference>
<dbReference type="InterPro" id="IPR003439">
    <property type="entry name" value="ABC_transporter-like_ATP-bd"/>
</dbReference>
<dbReference type="InterPro" id="IPR005895">
    <property type="entry name" value="ABC_transptr_haem_export_CcmA"/>
</dbReference>
<dbReference type="InterPro" id="IPR027417">
    <property type="entry name" value="P-loop_NTPase"/>
</dbReference>
<dbReference type="NCBIfam" id="TIGR01189">
    <property type="entry name" value="ccmA"/>
    <property type="match status" value="1"/>
</dbReference>
<dbReference type="PANTHER" id="PTHR43499">
    <property type="entry name" value="ABC TRANSPORTER I FAMILY MEMBER 1"/>
    <property type="match status" value="1"/>
</dbReference>
<dbReference type="PANTHER" id="PTHR43499:SF1">
    <property type="entry name" value="ABC TRANSPORTER I FAMILY MEMBER 1"/>
    <property type="match status" value="1"/>
</dbReference>
<dbReference type="Pfam" id="PF00005">
    <property type="entry name" value="ABC_tran"/>
    <property type="match status" value="1"/>
</dbReference>
<dbReference type="SMART" id="SM00382">
    <property type="entry name" value="AAA"/>
    <property type="match status" value="1"/>
</dbReference>
<dbReference type="SUPFAM" id="SSF52540">
    <property type="entry name" value="P-loop containing nucleoside triphosphate hydrolases"/>
    <property type="match status" value="1"/>
</dbReference>
<dbReference type="PROSITE" id="PS50893">
    <property type="entry name" value="ABC_TRANSPORTER_2"/>
    <property type="match status" value="1"/>
</dbReference>
<dbReference type="PROSITE" id="PS51243">
    <property type="entry name" value="CCMA"/>
    <property type="match status" value="1"/>
</dbReference>
<reference key="1">
    <citation type="journal article" date="2005" name="Infect. Immun.">
        <title>Whole-genome analyses of speciation events in pathogenic Brucellae.</title>
        <authorList>
            <person name="Chain P.S."/>
            <person name="Comerci D.J."/>
            <person name="Tolmasky M.E."/>
            <person name="Larimer F.W."/>
            <person name="Malfatti S.A."/>
            <person name="Vergez L.M."/>
            <person name="Aguero F."/>
            <person name="Land M.L."/>
            <person name="Ugalde R.A."/>
            <person name="Garcia E."/>
        </authorList>
    </citation>
    <scope>NUCLEOTIDE SEQUENCE [LARGE SCALE GENOMIC DNA]</scope>
    <source>
        <strain>2308</strain>
    </source>
</reference>
<gene>
    <name evidence="1" type="primary">ccmA</name>
    <name type="ordered locus">BAB1_0091</name>
</gene>
<comment type="function">
    <text evidence="1">Part of the ABC transporter complex CcmAB involved in the biogenesis of c-type cytochromes; once thought to export heme, this seems not to be the case, but its exact role is uncertain. Responsible for energy coupling to the transport system.</text>
</comment>
<comment type="catalytic activity">
    <reaction evidence="1">
        <text>heme b(in) + ATP + H2O = heme b(out) + ADP + phosphate + H(+)</text>
        <dbReference type="Rhea" id="RHEA:19261"/>
        <dbReference type="ChEBI" id="CHEBI:15377"/>
        <dbReference type="ChEBI" id="CHEBI:15378"/>
        <dbReference type="ChEBI" id="CHEBI:30616"/>
        <dbReference type="ChEBI" id="CHEBI:43474"/>
        <dbReference type="ChEBI" id="CHEBI:60344"/>
        <dbReference type="ChEBI" id="CHEBI:456216"/>
        <dbReference type="EC" id="7.6.2.5"/>
    </reaction>
</comment>
<comment type="subunit">
    <text evidence="1">The complex is composed of two ATP-binding proteins (CcmA) and two transmembrane proteins (CcmB).</text>
</comment>
<comment type="subcellular location">
    <subcellularLocation>
        <location evidence="1">Cell inner membrane</location>
        <topology evidence="1">Peripheral membrane protein</topology>
    </subcellularLocation>
</comment>
<comment type="similarity">
    <text evidence="1">Belongs to the ABC transporter superfamily. CcmA exporter (TC 3.A.1.107) family.</text>
</comment>
<organism>
    <name type="scientific">Brucella abortus (strain 2308)</name>
    <dbReference type="NCBI Taxonomy" id="359391"/>
    <lineage>
        <taxon>Bacteria</taxon>
        <taxon>Pseudomonadati</taxon>
        <taxon>Pseudomonadota</taxon>
        <taxon>Alphaproteobacteria</taxon>
        <taxon>Hyphomicrobiales</taxon>
        <taxon>Brucellaceae</taxon>
        <taxon>Brucella/Ochrobactrum group</taxon>
        <taxon>Brucella</taxon>
    </lineage>
</organism>
<proteinExistence type="inferred from homology"/>
<evidence type="ECO:0000255" key="1">
    <source>
        <dbReference type="HAMAP-Rule" id="MF_01707"/>
    </source>
</evidence>
<feature type="chain" id="PRO_0000260189" description="Cytochrome c biogenesis ATP-binding export protein CcmA">
    <location>
        <begin position="1"/>
        <end position="215"/>
    </location>
</feature>
<feature type="domain" description="ABC transporter" evidence="1">
    <location>
        <begin position="3"/>
        <end position="215"/>
    </location>
</feature>
<feature type="binding site" evidence="1">
    <location>
        <begin position="35"/>
        <end position="42"/>
    </location>
    <ligand>
        <name>ATP</name>
        <dbReference type="ChEBI" id="CHEBI:30616"/>
    </ligand>
</feature>